<organism>
    <name type="scientific">Ruegeria sp. (strain TM1040)</name>
    <name type="common">Silicibacter sp.</name>
    <dbReference type="NCBI Taxonomy" id="292414"/>
    <lineage>
        <taxon>Bacteria</taxon>
        <taxon>Pseudomonadati</taxon>
        <taxon>Pseudomonadota</taxon>
        <taxon>Alphaproteobacteria</taxon>
        <taxon>Rhodobacterales</taxon>
        <taxon>Roseobacteraceae</taxon>
        <taxon>Ruegeria</taxon>
    </lineage>
</organism>
<proteinExistence type="inferred from homology"/>
<reference key="1">
    <citation type="submission" date="2006-05" db="EMBL/GenBank/DDBJ databases">
        <title>Complete sequence of chromosome of Silicibacter sp. TM1040.</title>
        <authorList>
            <consortium name="US DOE Joint Genome Institute"/>
            <person name="Copeland A."/>
            <person name="Lucas S."/>
            <person name="Lapidus A."/>
            <person name="Barry K."/>
            <person name="Detter J.C."/>
            <person name="Glavina del Rio T."/>
            <person name="Hammon N."/>
            <person name="Israni S."/>
            <person name="Dalin E."/>
            <person name="Tice H."/>
            <person name="Pitluck S."/>
            <person name="Brettin T."/>
            <person name="Bruce D."/>
            <person name="Han C."/>
            <person name="Tapia R."/>
            <person name="Goodwin L."/>
            <person name="Thompson L.S."/>
            <person name="Gilna P."/>
            <person name="Schmutz J."/>
            <person name="Larimer F."/>
            <person name="Land M."/>
            <person name="Hauser L."/>
            <person name="Kyrpides N."/>
            <person name="Kim E."/>
            <person name="Belas R."/>
            <person name="Moran M.A."/>
            <person name="Buchan A."/>
            <person name="Gonzalez J.M."/>
            <person name="Schell M.A."/>
            <person name="Sun F."/>
            <person name="Richardson P."/>
        </authorList>
    </citation>
    <scope>NUCLEOTIDE SEQUENCE [LARGE SCALE GENOMIC DNA]</scope>
    <source>
        <strain>TM1040</strain>
    </source>
</reference>
<name>G6PI_RUEST</name>
<dbReference type="EC" id="5.3.1.9" evidence="1"/>
<dbReference type="EMBL" id="CP000377">
    <property type="protein sequence ID" value="ABF63111.1"/>
    <property type="molecule type" value="Genomic_DNA"/>
</dbReference>
<dbReference type="RefSeq" id="WP_011537726.1">
    <property type="nucleotide sequence ID" value="NC_008044.1"/>
</dbReference>
<dbReference type="SMR" id="Q1GJQ5"/>
<dbReference type="STRING" id="292414.TM1040_0378"/>
<dbReference type="KEGG" id="sit:TM1040_0378"/>
<dbReference type="eggNOG" id="COG0166">
    <property type="taxonomic scope" value="Bacteria"/>
</dbReference>
<dbReference type="HOGENOM" id="CLU_017947_3_1_5"/>
<dbReference type="OrthoDB" id="140919at2"/>
<dbReference type="UniPathway" id="UPA00109">
    <property type="reaction ID" value="UER00181"/>
</dbReference>
<dbReference type="UniPathway" id="UPA00138"/>
<dbReference type="Proteomes" id="UP000000636">
    <property type="component" value="Chromosome"/>
</dbReference>
<dbReference type="GO" id="GO:0005829">
    <property type="term" value="C:cytosol"/>
    <property type="evidence" value="ECO:0007669"/>
    <property type="project" value="TreeGrafter"/>
</dbReference>
<dbReference type="GO" id="GO:0097367">
    <property type="term" value="F:carbohydrate derivative binding"/>
    <property type="evidence" value="ECO:0007669"/>
    <property type="project" value="InterPro"/>
</dbReference>
<dbReference type="GO" id="GO:0004347">
    <property type="term" value="F:glucose-6-phosphate isomerase activity"/>
    <property type="evidence" value="ECO:0007669"/>
    <property type="project" value="UniProtKB-UniRule"/>
</dbReference>
<dbReference type="GO" id="GO:0048029">
    <property type="term" value="F:monosaccharide binding"/>
    <property type="evidence" value="ECO:0007669"/>
    <property type="project" value="TreeGrafter"/>
</dbReference>
<dbReference type="GO" id="GO:0006094">
    <property type="term" value="P:gluconeogenesis"/>
    <property type="evidence" value="ECO:0007669"/>
    <property type="project" value="UniProtKB-UniRule"/>
</dbReference>
<dbReference type="GO" id="GO:0051156">
    <property type="term" value="P:glucose 6-phosphate metabolic process"/>
    <property type="evidence" value="ECO:0007669"/>
    <property type="project" value="TreeGrafter"/>
</dbReference>
<dbReference type="GO" id="GO:0006096">
    <property type="term" value="P:glycolytic process"/>
    <property type="evidence" value="ECO:0007669"/>
    <property type="project" value="UniProtKB-UniRule"/>
</dbReference>
<dbReference type="CDD" id="cd05015">
    <property type="entry name" value="SIS_PGI_1"/>
    <property type="match status" value="1"/>
</dbReference>
<dbReference type="CDD" id="cd05016">
    <property type="entry name" value="SIS_PGI_2"/>
    <property type="match status" value="1"/>
</dbReference>
<dbReference type="Gene3D" id="1.10.1390.10">
    <property type="match status" value="1"/>
</dbReference>
<dbReference type="Gene3D" id="3.40.50.10490">
    <property type="entry name" value="Glucose-6-phosphate isomerase like protein, domain 1"/>
    <property type="match status" value="2"/>
</dbReference>
<dbReference type="HAMAP" id="MF_00473">
    <property type="entry name" value="G6P_isomerase"/>
    <property type="match status" value="1"/>
</dbReference>
<dbReference type="InterPro" id="IPR001672">
    <property type="entry name" value="G6P_Isomerase"/>
</dbReference>
<dbReference type="InterPro" id="IPR023096">
    <property type="entry name" value="G6P_Isomerase_C"/>
</dbReference>
<dbReference type="InterPro" id="IPR018189">
    <property type="entry name" value="Phosphoglucose_isomerase_CS"/>
</dbReference>
<dbReference type="InterPro" id="IPR046348">
    <property type="entry name" value="SIS_dom_sf"/>
</dbReference>
<dbReference type="InterPro" id="IPR035476">
    <property type="entry name" value="SIS_PGI_1"/>
</dbReference>
<dbReference type="InterPro" id="IPR035482">
    <property type="entry name" value="SIS_PGI_2"/>
</dbReference>
<dbReference type="NCBIfam" id="NF001211">
    <property type="entry name" value="PRK00179.1"/>
    <property type="match status" value="1"/>
</dbReference>
<dbReference type="PANTHER" id="PTHR11469">
    <property type="entry name" value="GLUCOSE-6-PHOSPHATE ISOMERASE"/>
    <property type="match status" value="1"/>
</dbReference>
<dbReference type="PANTHER" id="PTHR11469:SF1">
    <property type="entry name" value="GLUCOSE-6-PHOSPHATE ISOMERASE"/>
    <property type="match status" value="1"/>
</dbReference>
<dbReference type="Pfam" id="PF00342">
    <property type="entry name" value="PGI"/>
    <property type="match status" value="1"/>
</dbReference>
<dbReference type="PRINTS" id="PR00662">
    <property type="entry name" value="G6PISOMERASE"/>
</dbReference>
<dbReference type="SUPFAM" id="SSF53697">
    <property type="entry name" value="SIS domain"/>
    <property type="match status" value="1"/>
</dbReference>
<dbReference type="PROSITE" id="PS00765">
    <property type="entry name" value="P_GLUCOSE_ISOMERASE_1"/>
    <property type="match status" value="1"/>
</dbReference>
<dbReference type="PROSITE" id="PS00174">
    <property type="entry name" value="P_GLUCOSE_ISOMERASE_2"/>
    <property type="match status" value="1"/>
</dbReference>
<dbReference type="PROSITE" id="PS51463">
    <property type="entry name" value="P_GLUCOSE_ISOMERASE_3"/>
    <property type="match status" value="1"/>
</dbReference>
<accession>Q1GJQ5</accession>
<comment type="function">
    <text evidence="1">Catalyzes the reversible isomerization of glucose-6-phosphate to fructose-6-phosphate.</text>
</comment>
<comment type="catalytic activity">
    <reaction evidence="1">
        <text>alpha-D-glucose 6-phosphate = beta-D-fructose 6-phosphate</text>
        <dbReference type="Rhea" id="RHEA:11816"/>
        <dbReference type="ChEBI" id="CHEBI:57634"/>
        <dbReference type="ChEBI" id="CHEBI:58225"/>
        <dbReference type="EC" id="5.3.1.9"/>
    </reaction>
</comment>
<comment type="pathway">
    <text evidence="1">Carbohydrate biosynthesis; gluconeogenesis.</text>
</comment>
<comment type="pathway">
    <text evidence="1">Carbohydrate degradation; glycolysis; D-glyceraldehyde 3-phosphate and glycerone phosphate from D-glucose: step 2/4.</text>
</comment>
<comment type="subcellular location">
    <subcellularLocation>
        <location evidence="1">Cytoplasm</location>
    </subcellularLocation>
</comment>
<comment type="similarity">
    <text evidence="1">Belongs to the GPI family.</text>
</comment>
<sequence>MSDIWQQLSAHRAATEATPLTDYFAQDADRFARYSASAGEMLLDYSKTALDDTARDLLVQLAESVDLKSRIAAMMSGAKINSTENRAVLHTALRAPKDAVIEVDGENVVPGIQKVLAQMGAFATALREGSYQTKTGTAFTDVVNIGIGGSDLGPVMATLALAPYHDGPACHFVSNVDGAHIHDVLAGLNPETTLVVIASKTFTTIETMTNAETAIQWLKGALGEDVSTHLAAVSTALDKTAAMGIPDARVFGFADWVGGRYSMWGPIGLPIMIAVGPESFGEFLAGAAAMDQHFRDAPLMENLPALLGLIGVWHNNICGYGSRAVLPYDQRLSRLPAYLQQLDMESNGKSVALDGSPLPRASGPVVWGEPGTNGQHAFYQLLHQGTQVIPTEFLIAATGHEPELAHQHNLLKANCLAQSEALMLGRSWDEAREIAIARGFDGVDADRMAGHLSFPGNRPSVTLAYPKLTPFVFGQIVALYEHRVFTEGVIWGINSFDQWGVELGKELATRLLPMVEGADASQKDASTRGLLAKLST</sequence>
<keyword id="KW-0963">Cytoplasm</keyword>
<keyword id="KW-0312">Gluconeogenesis</keyword>
<keyword id="KW-0324">Glycolysis</keyword>
<keyword id="KW-0413">Isomerase</keyword>
<keyword id="KW-1185">Reference proteome</keyword>
<gene>
    <name evidence="1" type="primary">pgi</name>
    <name type="ordered locus">TM1040_0378</name>
</gene>
<evidence type="ECO:0000255" key="1">
    <source>
        <dbReference type="HAMAP-Rule" id="MF_00473"/>
    </source>
</evidence>
<protein>
    <recommendedName>
        <fullName evidence="1">Glucose-6-phosphate isomerase</fullName>
        <shortName evidence="1">GPI</shortName>
        <ecNumber evidence="1">5.3.1.9</ecNumber>
    </recommendedName>
    <alternativeName>
        <fullName evidence="1">Phosphoglucose isomerase</fullName>
        <shortName evidence="1">PGI</shortName>
    </alternativeName>
    <alternativeName>
        <fullName evidence="1">Phosphohexose isomerase</fullName>
        <shortName evidence="1">PHI</shortName>
    </alternativeName>
</protein>
<feature type="chain" id="PRO_0000252645" description="Glucose-6-phosphate isomerase">
    <location>
        <begin position="1"/>
        <end position="536"/>
    </location>
</feature>
<feature type="active site" description="Proton donor" evidence="1">
    <location>
        <position position="345"/>
    </location>
</feature>
<feature type="active site" evidence="1">
    <location>
        <position position="376"/>
    </location>
</feature>
<feature type="active site" evidence="1">
    <location>
        <position position="505"/>
    </location>
</feature>